<gene>
    <name type="primary">nutA</name>
    <name type="ordered locus">VV1_0248</name>
</gene>
<dbReference type="EC" id="3.1.3.5"/>
<dbReference type="EMBL" id="AE016795">
    <property type="protein sequence ID" value="AAO08784.2"/>
    <property type="molecule type" value="Genomic_DNA"/>
</dbReference>
<dbReference type="RefSeq" id="WP_011078362.1">
    <property type="nucleotide sequence ID" value="NC_004459.3"/>
</dbReference>
<dbReference type="SMR" id="Q8DFG4"/>
<dbReference type="KEGG" id="vvu:VV1_0248"/>
<dbReference type="HOGENOM" id="CLU_005854_7_0_6"/>
<dbReference type="Proteomes" id="UP000002275">
    <property type="component" value="Chromosome 1"/>
</dbReference>
<dbReference type="GO" id="GO:0009279">
    <property type="term" value="C:cell outer membrane"/>
    <property type="evidence" value="ECO:0007669"/>
    <property type="project" value="UniProtKB-SubCell"/>
</dbReference>
<dbReference type="GO" id="GO:0030288">
    <property type="term" value="C:outer membrane-bounded periplasmic space"/>
    <property type="evidence" value="ECO:0007669"/>
    <property type="project" value="TreeGrafter"/>
</dbReference>
<dbReference type="GO" id="GO:0008253">
    <property type="term" value="F:5'-nucleotidase activity"/>
    <property type="evidence" value="ECO:0007669"/>
    <property type="project" value="UniProtKB-EC"/>
</dbReference>
<dbReference type="GO" id="GO:0046872">
    <property type="term" value="F:metal ion binding"/>
    <property type="evidence" value="ECO:0007669"/>
    <property type="project" value="UniProtKB-KW"/>
</dbReference>
<dbReference type="GO" id="GO:0000166">
    <property type="term" value="F:nucleotide binding"/>
    <property type="evidence" value="ECO:0007669"/>
    <property type="project" value="UniProtKB-KW"/>
</dbReference>
<dbReference type="GO" id="GO:0008768">
    <property type="term" value="F:UDP-sugar diphosphatase activity"/>
    <property type="evidence" value="ECO:0007669"/>
    <property type="project" value="TreeGrafter"/>
</dbReference>
<dbReference type="GO" id="GO:0009166">
    <property type="term" value="P:nucleotide catabolic process"/>
    <property type="evidence" value="ECO:0007669"/>
    <property type="project" value="InterPro"/>
</dbReference>
<dbReference type="FunFam" id="3.60.21.10:FF:000025">
    <property type="entry name" value="Protein UshA"/>
    <property type="match status" value="1"/>
</dbReference>
<dbReference type="FunFam" id="3.90.780.10:FF:000003">
    <property type="entry name" value="Protein UshA"/>
    <property type="match status" value="1"/>
</dbReference>
<dbReference type="Gene3D" id="3.60.21.10">
    <property type="match status" value="1"/>
</dbReference>
<dbReference type="Gene3D" id="3.90.780.10">
    <property type="entry name" value="5'-Nucleotidase, C-terminal domain"/>
    <property type="match status" value="1"/>
</dbReference>
<dbReference type="InterPro" id="IPR008334">
    <property type="entry name" value="5'-Nucleotdase_C"/>
</dbReference>
<dbReference type="InterPro" id="IPR036907">
    <property type="entry name" value="5'-Nucleotdase_C_sf"/>
</dbReference>
<dbReference type="InterPro" id="IPR006146">
    <property type="entry name" value="5'-Nucleotdase_CS"/>
</dbReference>
<dbReference type="InterPro" id="IPR006179">
    <property type="entry name" value="5_nucleotidase/apyrase"/>
</dbReference>
<dbReference type="InterPro" id="IPR004843">
    <property type="entry name" value="Calcineurin-like_PHP_ApaH"/>
</dbReference>
<dbReference type="InterPro" id="IPR029052">
    <property type="entry name" value="Metallo-depent_PP-like"/>
</dbReference>
<dbReference type="NCBIfam" id="NF007109">
    <property type="entry name" value="PRK09558.1"/>
    <property type="match status" value="1"/>
</dbReference>
<dbReference type="PANTHER" id="PTHR11575">
    <property type="entry name" value="5'-NUCLEOTIDASE-RELATED"/>
    <property type="match status" value="1"/>
</dbReference>
<dbReference type="PANTHER" id="PTHR11575:SF46">
    <property type="entry name" value="PROTEIN USHA"/>
    <property type="match status" value="1"/>
</dbReference>
<dbReference type="Pfam" id="PF02872">
    <property type="entry name" value="5_nucleotid_C"/>
    <property type="match status" value="1"/>
</dbReference>
<dbReference type="Pfam" id="PF00149">
    <property type="entry name" value="Metallophos"/>
    <property type="match status" value="1"/>
</dbReference>
<dbReference type="PRINTS" id="PR01607">
    <property type="entry name" value="APYRASEFAMLY"/>
</dbReference>
<dbReference type="SUPFAM" id="SSF55816">
    <property type="entry name" value="5'-nucleotidase (syn. UDP-sugar hydrolase), C-terminal domain"/>
    <property type="match status" value="1"/>
</dbReference>
<dbReference type="SUPFAM" id="SSF56300">
    <property type="entry name" value="Metallo-dependent phosphatases"/>
    <property type="match status" value="1"/>
</dbReference>
<dbReference type="PROSITE" id="PS00785">
    <property type="entry name" value="5_NUCLEOTIDASE_1"/>
    <property type="match status" value="1"/>
</dbReference>
<dbReference type="PROSITE" id="PS00786">
    <property type="entry name" value="5_NUCLEOTIDASE_2"/>
    <property type="match status" value="1"/>
</dbReference>
<dbReference type="PROSITE" id="PS51257">
    <property type="entry name" value="PROKAR_LIPOPROTEIN"/>
    <property type="match status" value="1"/>
</dbReference>
<accession>Q8DFG4</accession>
<organism>
    <name type="scientific">Vibrio vulnificus (strain CMCP6)</name>
    <dbReference type="NCBI Taxonomy" id="216895"/>
    <lineage>
        <taxon>Bacteria</taxon>
        <taxon>Pseudomonadati</taxon>
        <taxon>Pseudomonadota</taxon>
        <taxon>Gammaproteobacteria</taxon>
        <taxon>Vibrionales</taxon>
        <taxon>Vibrionaceae</taxon>
        <taxon>Vibrio</taxon>
    </lineage>
</organism>
<protein>
    <recommendedName>
        <fullName>5'-nucleotidase</fullName>
        <ecNumber>3.1.3.5</ecNumber>
    </recommendedName>
</protein>
<name>5NTD_VIBVU</name>
<keyword id="KW-0998">Cell outer membrane</keyword>
<keyword id="KW-0378">Hydrolase</keyword>
<keyword id="KW-0449">Lipoprotein</keyword>
<keyword id="KW-0460">Magnesium</keyword>
<keyword id="KW-0472">Membrane</keyword>
<keyword id="KW-0479">Metal-binding</keyword>
<keyword id="KW-0547">Nucleotide-binding</keyword>
<keyword id="KW-0564">Palmitate</keyword>
<keyword id="KW-0732">Signal</keyword>
<sequence>MKQRLIVKTALSAAILATLAGCATQPTQEWAADTTYKLTVLHTNDHHGRFWQNKYGEYGMAARKTLIDELRAEIQAEGGSVLLLSGGDINTGVPESDLQDAEPDFKGMSKIGYDAMALGNHEFDNPLDVLMKQKEWANFPMLSANIYDKKTGERMFQAYEMFDKQGIKIAVIGLTTEDTAKLGNPEFIGAIDFRDPKEEAKKLIAELKETEKPDLIFAVTHMGHYEDGKRGINAPGDVALARYLNEGDLDMIVGGHSQEPVCMEAPNVVKKNFKPADECKPDQQNGTYIVQAHEWGKYVGRADYEFRNGELRMVSYDLIPVNLKKKVEVDGKSQRVFIESEIKEDTALLEFLRPYQEKGQEQLNVKIADTNGKLEGDRNVVRFQQTNLGRLIAVSHMERAKADFAVMNSGGVRDSIEAGEVTYKDVLTVQPFANILTYTDMTGKEVLDYLNVVATKPVDSGAYAQFAGISMTVANGKVSNVFIGGKQLRLDETYRFTVPSYNAAGGDGYPKLTGHPGYVNTGFVDAEVLKEFLEKNSPIDVNKFAPNGEIVYK</sequence>
<feature type="signal peptide" evidence="2">
    <location>
        <begin position="1"/>
        <end position="21"/>
    </location>
</feature>
<feature type="chain" id="PRO_0000000030" description="5'-nucleotidase">
    <location>
        <begin position="22"/>
        <end position="553"/>
    </location>
</feature>
<feature type="binding site" evidence="1">
    <location>
        <position position="45"/>
    </location>
    <ligand>
        <name>a divalent metal cation</name>
        <dbReference type="ChEBI" id="CHEBI:60240"/>
        <label>1</label>
    </ligand>
</feature>
<feature type="binding site" evidence="1">
    <location>
        <position position="47"/>
    </location>
    <ligand>
        <name>a divalent metal cation</name>
        <dbReference type="ChEBI" id="CHEBI:60240"/>
        <label>1</label>
    </ligand>
</feature>
<feature type="binding site" evidence="1">
    <location>
        <position position="88"/>
    </location>
    <ligand>
        <name>a divalent metal cation</name>
        <dbReference type="ChEBI" id="CHEBI:60240"/>
        <label>1</label>
    </ligand>
</feature>
<feature type="binding site" evidence="1">
    <location>
        <position position="88"/>
    </location>
    <ligand>
        <name>a divalent metal cation</name>
        <dbReference type="ChEBI" id="CHEBI:60240"/>
        <label>2</label>
    </ligand>
</feature>
<feature type="binding site" evidence="1">
    <location>
        <position position="120"/>
    </location>
    <ligand>
        <name>a divalent metal cation</name>
        <dbReference type="ChEBI" id="CHEBI:60240"/>
        <label>2</label>
    </ligand>
</feature>
<feature type="binding site" evidence="1">
    <location>
        <position position="221"/>
    </location>
    <ligand>
        <name>a divalent metal cation</name>
        <dbReference type="ChEBI" id="CHEBI:60240"/>
        <label>2</label>
    </ligand>
</feature>
<feature type="binding site" evidence="1">
    <location>
        <position position="256"/>
    </location>
    <ligand>
        <name>a divalent metal cation</name>
        <dbReference type="ChEBI" id="CHEBI:60240"/>
        <label>2</label>
    </ligand>
</feature>
<feature type="binding site" evidence="1">
    <location>
        <position position="258"/>
    </location>
    <ligand>
        <name>a divalent metal cation</name>
        <dbReference type="ChEBI" id="CHEBI:60240"/>
        <label>1</label>
    </ligand>
</feature>
<feature type="binding site" evidence="1">
    <location>
        <position position="432"/>
    </location>
    <ligand>
        <name>substrate</name>
    </ligand>
</feature>
<feature type="binding site" evidence="1">
    <location>
        <begin position="501"/>
        <end position="507"/>
    </location>
    <ligand>
        <name>substrate</name>
    </ligand>
</feature>
<feature type="site" description="Transition state stabilizer" evidence="1">
    <location>
        <position position="121"/>
    </location>
</feature>
<feature type="site" description="Transition state stabilizer" evidence="1">
    <location>
        <position position="124"/>
    </location>
</feature>
<feature type="lipid moiety-binding region" description="N-palmitoyl cysteine" evidence="3">
    <location>
        <position position="22"/>
    </location>
</feature>
<feature type="lipid moiety-binding region" description="S-diacylglycerol cysteine" evidence="3">
    <location>
        <position position="22"/>
    </location>
</feature>
<evidence type="ECO:0000250" key="1"/>
<evidence type="ECO:0000255" key="2">
    <source>
        <dbReference type="PROSITE-ProRule" id="PRU00303"/>
    </source>
</evidence>
<evidence type="ECO:0000305" key="3"/>
<proteinExistence type="inferred from homology"/>
<comment type="function">
    <text evidence="1">Degradation of extracellular 5'-nucleotides for nutritional needs.</text>
</comment>
<comment type="catalytic activity">
    <reaction>
        <text>a ribonucleoside 5'-phosphate + H2O = a ribonucleoside + phosphate</text>
        <dbReference type="Rhea" id="RHEA:12484"/>
        <dbReference type="ChEBI" id="CHEBI:15377"/>
        <dbReference type="ChEBI" id="CHEBI:18254"/>
        <dbReference type="ChEBI" id="CHEBI:43474"/>
        <dbReference type="ChEBI" id="CHEBI:58043"/>
        <dbReference type="EC" id="3.1.3.5"/>
    </reaction>
</comment>
<comment type="cofactor">
    <cofactor evidence="1">
        <name>chloride</name>
        <dbReference type="ChEBI" id="CHEBI:17996"/>
    </cofactor>
    <text evidence="1">Chloride.</text>
</comment>
<comment type="cofactor">
    <cofactor evidence="1">
        <name>Mg(2+)</name>
        <dbReference type="ChEBI" id="CHEBI:18420"/>
    </cofactor>
</comment>
<comment type="subcellular location">
    <subcellularLocation>
        <location evidence="3">Cell outer membrane</location>
        <topology evidence="3">Lipid-anchor</topology>
    </subcellularLocation>
</comment>
<comment type="similarity">
    <text evidence="3">Belongs to the 5'-nucleotidase family.</text>
</comment>
<reference key="1">
    <citation type="submission" date="2002-12" db="EMBL/GenBank/DDBJ databases">
        <title>Complete genome sequence of Vibrio vulnificus CMCP6.</title>
        <authorList>
            <person name="Rhee J.H."/>
            <person name="Kim S.Y."/>
            <person name="Chung S.S."/>
            <person name="Kim J.J."/>
            <person name="Moon Y.H."/>
            <person name="Jeong H."/>
            <person name="Choy H.E."/>
        </authorList>
    </citation>
    <scope>NUCLEOTIDE SEQUENCE [LARGE SCALE GENOMIC DNA]</scope>
    <source>
        <strain>CMCP6</strain>
    </source>
</reference>